<evidence type="ECO:0000255" key="1">
    <source>
        <dbReference type="HAMAP-Rule" id="MF_01029"/>
    </source>
</evidence>
<proteinExistence type="inferred from homology"/>
<organism>
    <name type="scientific">Escherichia coli O7:K1 (strain IAI39 / ExPEC)</name>
    <dbReference type="NCBI Taxonomy" id="585057"/>
    <lineage>
        <taxon>Bacteria</taxon>
        <taxon>Pseudomonadati</taxon>
        <taxon>Pseudomonadota</taxon>
        <taxon>Gammaproteobacteria</taxon>
        <taxon>Enterobacterales</taxon>
        <taxon>Enterobacteriaceae</taxon>
        <taxon>Escherichia</taxon>
    </lineage>
</organism>
<accession>B7NKM4</accession>
<name>YHBQ_ECO7I</name>
<protein>
    <recommendedName>
        <fullName evidence="1">UPF0213 protein YhbQ</fullName>
    </recommendedName>
</protein>
<comment type="similarity">
    <text evidence="1">Belongs to the UPF0213 family.</text>
</comment>
<dbReference type="EMBL" id="CU928164">
    <property type="protein sequence ID" value="CAR19768.1"/>
    <property type="molecule type" value="Genomic_DNA"/>
</dbReference>
<dbReference type="RefSeq" id="WP_000189315.1">
    <property type="nucleotide sequence ID" value="NC_011750.1"/>
</dbReference>
<dbReference type="RefSeq" id="YP_002409555.1">
    <property type="nucleotide sequence ID" value="NC_011750.1"/>
</dbReference>
<dbReference type="SMR" id="B7NKM4"/>
<dbReference type="STRING" id="585057.ECIAI39_3652"/>
<dbReference type="KEGG" id="ect:ECIAI39_3652"/>
<dbReference type="PATRIC" id="fig|585057.6.peg.3785"/>
<dbReference type="HOGENOM" id="CLU_135650_0_1_6"/>
<dbReference type="Proteomes" id="UP000000749">
    <property type="component" value="Chromosome"/>
</dbReference>
<dbReference type="CDD" id="cd10456">
    <property type="entry name" value="GIY-YIG_UPF0213"/>
    <property type="match status" value="1"/>
</dbReference>
<dbReference type="FunFam" id="3.40.1440.10:FF:000002">
    <property type="entry name" value="UPF0213 protein YhbQ"/>
    <property type="match status" value="1"/>
</dbReference>
<dbReference type="Gene3D" id="3.40.1440.10">
    <property type="entry name" value="GIY-YIG endonuclease"/>
    <property type="match status" value="1"/>
</dbReference>
<dbReference type="HAMAP" id="MF_01029">
    <property type="entry name" value="UPF0213"/>
    <property type="match status" value="1"/>
</dbReference>
<dbReference type="InterPro" id="IPR000305">
    <property type="entry name" value="GIY-YIG_endonuc"/>
</dbReference>
<dbReference type="InterPro" id="IPR035901">
    <property type="entry name" value="GIY-YIG_endonuc_sf"/>
</dbReference>
<dbReference type="InterPro" id="IPR050190">
    <property type="entry name" value="UPF0213_domain"/>
</dbReference>
<dbReference type="InterPro" id="IPR022992">
    <property type="entry name" value="UPF0213_GIY-YIG_endonuc"/>
</dbReference>
<dbReference type="PANTHER" id="PTHR34477">
    <property type="entry name" value="UPF0213 PROTEIN YHBQ"/>
    <property type="match status" value="1"/>
</dbReference>
<dbReference type="PANTHER" id="PTHR34477:SF1">
    <property type="entry name" value="UPF0213 PROTEIN YHBQ"/>
    <property type="match status" value="1"/>
</dbReference>
<dbReference type="Pfam" id="PF01541">
    <property type="entry name" value="GIY-YIG"/>
    <property type="match status" value="1"/>
</dbReference>
<dbReference type="SMART" id="SM00465">
    <property type="entry name" value="GIYc"/>
    <property type="match status" value="1"/>
</dbReference>
<dbReference type="SUPFAM" id="SSF82771">
    <property type="entry name" value="GIY-YIG endonuclease"/>
    <property type="match status" value="1"/>
</dbReference>
<dbReference type="PROSITE" id="PS50164">
    <property type="entry name" value="GIY_YIG"/>
    <property type="match status" value="1"/>
</dbReference>
<sequence>MTPWFLYLIRTADNKLYTGITTDVERRYQQHQSGKGAKALRGKGELTLAFSAPVGDRSLALRAEYRVKQLTKRQKERLVAEGAGFAELLSSLQTPKIKSD</sequence>
<gene>
    <name evidence="1" type="primary">yhbQ</name>
    <name type="ordered locus">ECIAI39_3652</name>
</gene>
<reference key="1">
    <citation type="journal article" date="2009" name="PLoS Genet.">
        <title>Organised genome dynamics in the Escherichia coli species results in highly diverse adaptive paths.</title>
        <authorList>
            <person name="Touchon M."/>
            <person name="Hoede C."/>
            <person name="Tenaillon O."/>
            <person name="Barbe V."/>
            <person name="Baeriswyl S."/>
            <person name="Bidet P."/>
            <person name="Bingen E."/>
            <person name="Bonacorsi S."/>
            <person name="Bouchier C."/>
            <person name="Bouvet O."/>
            <person name="Calteau A."/>
            <person name="Chiapello H."/>
            <person name="Clermont O."/>
            <person name="Cruveiller S."/>
            <person name="Danchin A."/>
            <person name="Diard M."/>
            <person name="Dossat C."/>
            <person name="Karoui M.E."/>
            <person name="Frapy E."/>
            <person name="Garry L."/>
            <person name="Ghigo J.M."/>
            <person name="Gilles A.M."/>
            <person name="Johnson J."/>
            <person name="Le Bouguenec C."/>
            <person name="Lescat M."/>
            <person name="Mangenot S."/>
            <person name="Martinez-Jehanne V."/>
            <person name="Matic I."/>
            <person name="Nassif X."/>
            <person name="Oztas S."/>
            <person name="Petit M.A."/>
            <person name="Pichon C."/>
            <person name="Rouy Z."/>
            <person name="Ruf C.S."/>
            <person name="Schneider D."/>
            <person name="Tourret J."/>
            <person name="Vacherie B."/>
            <person name="Vallenet D."/>
            <person name="Medigue C."/>
            <person name="Rocha E.P.C."/>
            <person name="Denamur E."/>
        </authorList>
    </citation>
    <scope>NUCLEOTIDE SEQUENCE [LARGE SCALE GENOMIC DNA]</scope>
    <source>
        <strain>IAI39 / ExPEC</strain>
    </source>
</reference>
<feature type="chain" id="PRO_1000135744" description="UPF0213 protein YhbQ">
    <location>
        <begin position="1"/>
        <end position="100"/>
    </location>
</feature>
<feature type="domain" description="GIY-YIG" evidence="1">
    <location>
        <begin position="2"/>
        <end position="77"/>
    </location>
</feature>